<comment type="function">
    <text>Binds to the Fc region of immunoglobulins gamma. Low affinity receptor.</text>
</comment>
<comment type="subunit">
    <text evidence="1">Interacts with FGR and LYN.</text>
</comment>
<comment type="subcellular location">
    <subcellularLocation>
        <location>Cell membrane</location>
        <topology>Single-pass type I membrane protein</topology>
    </subcellularLocation>
</comment>
<comment type="tissue specificity">
    <text>Higher expression is found in macrophages than in neutrophils.</text>
</comment>
<comment type="domain">
    <text>Contains 1 copy of a cytoplasmic motif that is referred to as the immunoreceptor tyrosine-based inhibitor motif (ITIM). This motif is involved in modulation of cellular responses. The phosphorylated ITIM motif can bind the SH2 domain of several SH2-containing phosphatases.</text>
</comment>
<comment type="PTM">
    <text evidence="1">Phosphorylated by SRC-type Tyr-kinases such as LYN, BLK, FYN and SYK.</text>
</comment>
<organism>
    <name type="scientific">Bos taurus</name>
    <name type="common">Bovine</name>
    <dbReference type="NCBI Taxonomy" id="9913"/>
    <lineage>
        <taxon>Eukaryota</taxon>
        <taxon>Metazoa</taxon>
        <taxon>Chordata</taxon>
        <taxon>Craniata</taxon>
        <taxon>Vertebrata</taxon>
        <taxon>Euteleostomi</taxon>
        <taxon>Mammalia</taxon>
        <taxon>Eutheria</taxon>
        <taxon>Laurasiatheria</taxon>
        <taxon>Artiodactyla</taxon>
        <taxon>Ruminantia</taxon>
        <taxon>Pecora</taxon>
        <taxon>Bovidae</taxon>
        <taxon>Bovinae</taxon>
        <taxon>Bos</taxon>
    </lineage>
</organism>
<keyword id="KW-1003">Cell membrane</keyword>
<keyword id="KW-1015">Disulfide bond</keyword>
<keyword id="KW-0325">Glycoprotein</keyword>
<keyword id="KW-0390">IgG-binding protein</keyword>
<keyword id="KW-0393">Immunoglobulin domain</keyword>
<keyword id="KW-0472">Membrane</keyword>
<keyword id="KW-0597">Phosphoprotein</keyword>
<keyword id="KW-0675">Receptor</keyword>
<keyword id="KW-1185">Reference proteome</keyword>
<keyword id="KW-0677">Repeat</keyword>
<keyword id="KW-0732">Signal</keyword>
<keyword id="KW-0812">Transmembrane</keyword>
<keyword id="KW-1133">Transmembrane helix</keyword>
<proteinExistence type="evidence at transcript level"/>
<reference key="1">
    <citation type="journal article" date="1994" name="Immunogenetics">
        <title>Cattle Fc gamma RII: molecular cloning and ligand specificity.</title>
        <authorList>
            <person name="Zhang G."/>
            <person name="Young J.R."/>
            <person name="Tregaskes C.R."/>
            <person name="Howard C.J."/>
        </authorList>
    </citation>
    <scope>NUCLEOTIDE SEQUENCE [MRNA]</scope>
</reference>
<protein>
    <recommendedName>
        <fullName>Low affinity immunoglobulin gamma Fc region receptor II</fullName>
        <shortName>IgG Fc receptor II</shortName>
    </recommendedName>
    <alternativeName>
        <fullName>Fc-gamma RII</fullName>
        <shortName>FcRII</shortName>
    </alternativeName>
    <cdAntigenName>CD32</cdAntigenName>
</protein>
<dbReference type="EMBL" id="X75671">
    <property type="protein sequence ID" value="CAA53367.1"/>
    <property type="molecule type" value="mRNA"/>
</dbReference>
<dbReference type="PIR" id="I46021">
    <property type="entry name" value="I46021"/>
</dbReference>
<dbReference type="RefSeq" id="NP_776964.1">
    <property type="nucleotide sequence ID" value="NM_174539.2"/>
</dbReference>
<dbReference type="SMR" id="Q28110"/>
<dbReference type="FunCoup" id="Q28110">
    <property type="interactions" value="272"/>
</dbReference>
<dbReference type="STRING" id="9913.ENSBTAP00000029116"/>
<dbReference type="GlyCosmos" id="Q28110">
    <property type="glycosylation" value="6 sites, No reported glycans"/>
</dbReference>
<dbReference type="GlyGen" id="Q28110">
    <property type="glycosylation" value="6 sites"/>
</dbReference>
<dbReference type="PaxDb" id="9913-ENSBTAP00000045494"/>
<dbReference type="PeptideAtlas" id="Q28110"/>
<dbReference type="GeneID" id="282229"/>
<dbReference type="KEGG" id="bta:282229"/>
<dbReference type="CTD" id="2213"/>
<dbReference type="InParanoid" id="Q28110"/>
<dbReference type="OrthoDB" id="6151406at2759"/>
<dbReference type="Proteomes" id="UP000009136">
    <property type="component" value="Unplaced"/>
</dbReference>
<dbReference type="GO" id="GO:0009897">
    <property type="term" value="C:external side of plasma membrane"/>
    <property type="evidence" value="ECO:0000318"/>
    <property type="project" value="GO_Central"/>
</dbReference>
<dbReference type="GO" id="GO:0019864">
    <property type="term" value="F:IgG binding"/>
    <property type="evidence" value="ECO:0000318"/>
    <property type="project" value="GO_Central"/>
</dbReference>
<dbReference type="GO" id="GO:0019770">
    <property type="term" value="F:IgG receptor activity"/>
    <property type="evidence" value="ECO:0000318"/>
    <property type="project" value="GO_Central"/>
</dbReference>
<dbReference type="GO" id="GO:0001788">
    <property type="term" value="P:antibody-dependent cellular cytotoxicity"/>
    <property type="evidence" value="ECO:0000318"/>
    <property type="project" value="GO_Central"/>
</dbReference>
<dbReference type="GO" id="GO:0007166">
    <property type="term" value="P:cell surface receptor signaling pathway"/>
    <property type="evidence" value="ECO:0000318"/>
    <property type="project" value="GO_Central"/>
</dbReference>
<dbReference type="GO" id="GO:0050766">
    <property type="term" value="P:positive regulation of phagocytosis"/>
    <property type="evidence" value="ECO:0000318"/>
    <property type="project" value="GO_Central"/>
</dbReference>
<dbReference type="GO" id="GO:0032760">
    <property type="term" value="P:positive regulation of tumor necrosis factor production"/>
    <property type="evidence" value="ECO:0000318"/>
    <property type="project" value="GO_Central"/>
</dbReference>
<dbReference type="CDD" id="cd05753">
    <property type="entry name" value="Ig2_FcgammaR_like"/>
    <property type="match status" value="1"/>
</dbReference>
<dbReference type="FunFam" id="2.60.40.10:FF:000217">
    <property type="entry name" value="High affinity immunoglobulin gamma Fc receptor I"/>
    <property type="match status" value="1"/>
</dbReference>
<dbReference type="FunFam" id="2.60.40.10:FF:000356">
    <property type="entry name" value="Low affinity immunoglobulin gamma Fc region receptor III-A"/>
    <property type="match status" value="1"/>
</dbReference>
<dbReference type="Gene3D" id="2.60.40.10">
    <property type="entry name" value="Immunoglobulins"/>
    <property type="match status" value="2"/>
</dbReference>
<dbReference type="InterPro" id="IPR007110">
    <property type="entry name" value="Ig-like_dom"/>
</dbReference>
<dbReference type="InterPro" id="IPR036179">
    <property type="entry name" value="Ig-like_dom_sf"/>
</dbReference>
<dbReference type="InterPro" id="IPR013783">
    <property type="entry name" value="Ig-like_fold"/>
</dbReference>
<dbReference type="InterPro" id="IPR050488">
    <property type="entry name" value="Ig_Fc_receptor"/>
</dbReference>
<dbReference type="InterPro" id="IPR003599">
    <property type="entry name" value="Ig_sub"/>
</dbReference>
<dbReference type="PANTHER" id="PTHR11481">
    <property type="entry name" value="IMMUNOGLOBULIN FC RECEPTOR"/>
    <property type="match status" value="1"/>
</dbReference>
<dbReference type="PANTHER" id="PTHR11481:SF97">
    <property type="entry name" value="LOW AFFINITY IMMUNOGLOBULIN GAMMA FC REGION RECEPTOR II-B-RELATED"/>
    <property type="match status" value="1"/>
</dbReference>
<dbReference type="Pfam" id="PF13895">
    <property type="entry name" value="Ig_2"/>
    <property type="match status" value="2"/>
</dbReference>
<dbReference type="SMART" id="SM00409">
    <property type="entry name" value="IG"/>
    <property type="match status" value="2"/>
</dbReference>
<dbReference type="SUPFAM" id="SSF48726">
    <property type="entry name" value="Immunoglobulin"/>
    <property type="match status" value="2"/>
</dbReference>
<dbReference type="PROSITE" id="PS50835">
    <property type="entry name" value="IG_LIKE"/>
    <property type="match status" value="2"/>
</dbReference>
<accession>Q28110</accession>
<gene>
    <name type="primary">FCGR2</name>
</gene>
<sequence>MGIPSFLAFPAARRNRAHCTPWHPWGHMLLWTALLFLAPVSGKPDLPKAVVTIQPAWINVLREDHVTLTCQGTSFSAGNLTTWFHNGSSIHTQKQPSYSFRAGSNDSGSYRCQREQTSLSDPVHLDVISDWLLLQTPSLVFQEGEPIMLRCHSWRNQPLNKITFYQDRKSKIFSYQRTNFSIPRANLSHSGQYHCTAFIGKMLHSSQPVNITVQESSSSGPSSMTAVAIGTCFAAVAIVAAIITWFRLRRKPISAGLTDAENDAARTEAENTVTYSLLSHPDVAEEDSESDYQKRL</sequence>
<feature type="signal peptide" evidence="4">
    <location>
        <begin position="1"/>
        <end position="42"/>
    </location>
</feature>
<feature type="chain" id="PRO_0000015141" description="Low affinity immunoglobulin gamma Fc region receptor II">
    <location>
        <begin position="43"/>
        <end position="296"/>
    </location>
</feature>
<feature type="topological domain" description="Extracellular" evidence="4">
    <location>
        <begin position="43"/>
        <end position="225"/>
    </location>
</feature>
<feature type="transmembrane region" description="Helical" evidence="4">
    <location>
        <begin position="226"/>
        <end position="246"/>
    </location>
</feature>
<feature type="topological domain" description="Cytoplasmic" evidence="4">
    <location>
        <begin position="247"/>
        <end position="296"/>
    </location>
</feature>
<feature type="domain" description="Ig-like C2-type 1">
    <location>
        <begin position="47"/>
        <end position="129"/>
    </location>
</feature>
<feature type="domain" description="Ig-like C2-type 2">
    <location>
        <begin position="130"/>
        <end position="212"/>
    </location>
</feature>
<feature type="short sequence motif" description="ITIM motif">
    <location>
        <begin position="273"/>
        <end position="278"/>
    </location>
</feature>
<feature type="modified residue" description="Phosphotyrosine; by SRC-type Tyr-kinases" evidence="1">
    <location>
        <position position="275"/>
    </location>
</feature>
<feature type="modified residue" description="Phosphoserine" evidence="3">
    <location>
        <position position="288"/>
    </location>
</feature>
<feature type="modified residue" description="Phosphotyrosine" evidence="2">
    <location>
        <position position="292"/>
    </location>
</feature>
<feature type="glycosylation site" description="N-linked (GlcNAc...) asparagine" evidence="4">
    <location>
        <position position="79"/>
    </location>
</feature>
<feature type="glycosylation site" description="N-linked (GlcNAc...) asparagine" evidence="4">
    <location>
        <position position="86"/>
    </location>
</feature>
<feature type="glycosylation site" description="N-linked (GlcNAc...) asparagine" evidence="4">
    <location>
        <position position="105"/>
    </location>
</feature>
<feature type="glycosylation site" description="N-linked (GlcNAc...) asparagine" evidence="4">
    <location>
        <position position="179"/>
    </location>
</feature>
<feature type="glycosylation site" description="N-linked (GlcNAc...) asparagine" evidence="4">
    <location>
        <position position="186"/>
    </location>
</feature>
<feature type="glycosylation site" description="N-linked (GlcNAc...) asparagine" evidence="4">
    <location>
        <position position="210"/>
    </location>
</feature>
<feature type="disulfide bond" evidence="5">
    <location>
        <begin position="70"/>
        <end position="112"/>
    </location>
</feature>
<feature type="disulfide bond" evidence="5">
    <location>
        <begin position="151"/>
        <end position="195"/>
    </location>
</feature>
<evidence type="ECO:0000250" key="1"/>
<evidence type="ECO:0000250" key="2">
    <source>
        <dbReference type="UniProtKB" id="P08101"/>
    </source>
</evidence>
<evidence type="ECO:0000250" key="3">
    <source>
        <dbReference type="UniProtKB" id="Q63203"/>
    </source>
</evidence>
<evidence type="ECO:0000255" key="4"/>
<evidence type="ECO:0000255" key="5">
    <source>
        <dbReference type="PROSITE-ProRule" id="PRU00114"/>
    </source>
</evidence>
<name>FCGR2_BOVIN</name>